<name>CYB_CHLAE</name>
<proteinExistence type="inferred from homology"/>
<reference key="1">
    <citation type="journal article" date="2005" name="J. Hum. Evol.">
        <title>Catarrhine primate divergence dates estimated from complete mitochondrial genomes: concordance with fossil and nuclear DNA evidence.</title>
        <authorList>
            <person name="Raaum R.L."/>
            <person name="Sterner K.N."/>
            <person name="Noviello C.M."/>
            <person name="Stewart C.-B.R."/>
            <person name="Disotell T.R."/>
        </authorList>
    </citation>
    <scope>NUCLEOTIDE SEQUENCE [GENOMIC DNA]</scope>
</reference>
<comment type="function">
    <text evidence="2">Component of the ubiquinol-cytochrome c reductase complex (complex III or cytochrome b-c1 complex) that is part of the mitochondrial respiratory chain. The b-c1 complex mediates electron transfer from ubiquinol to cytochrome c. Contributes to the generation of a proton gradient across the mitochondrial membrane that is then used for ATP synthesis.</text>
</comment>
<comment type="cofactor">
    <cofactor evidence="2">
        <name>heme b</name>
        <dbReference type="ChEBI" id="CHEBI:60344"/>
    </cofactor>
    <text evidence="2">Binds 2 heme b groups non-covalently.</text>
</comment>
<comment type="subunit">
    <text evidence="2">The cytochrome bc1 complex contains 11 subunits: 3 respiratory subunits (MT-CYB, CYC1 and UQCRFS1), 2 core proteins (UQCRC1 and UQCRC2) and 6 low-molecular weight proteins (UQCRH/QCR6, UQCRB/QCR7, UQCRQ/QCR8, UQCR10/QCR9, UQCR11/QCR10 and a cleavage product of UQCRFS1). This cytochrome bc1 complex then forms a dimer.</text>
</comment>
<comment type="subcellular location">
    <subcellularLocation>
        <location evidence="2">Mitochondrion inner membrane</location>
        <topology evidence="2">Multi-pass membrane protein</topology>
    </subcellularLocation>
</comment>
<comment type="miscellaneous">
    <text evidence="1">Heme 1 (or BL or b562) is low-potential and absorbs at about 562 nm, and heme 2 (or BH or b566) is high-potential and absorbs at about 566 nm.</text>
</comment>
<comment type="similarity">
    <text evidence="3 4">Belongs to the cytochrome b family.</text>
</comment>
<comment type="caution">
    <text evidence="2">The full-length protein contains only eight transmembrane helices, not nine as predicted by bioinformatics tools.</text>
</comment>
<dbReference type="EMBL" id="AY863426">
    <property type="protein sequence ID" value="AAX55620.1"/>
    <property type="molecule type" value="Genomic_DNA"/>
</dbReference>
<dbReference type="RefSeq" id="YP_238254.1">
    <property type="nucleotide sequence ID" value="NC_007009.1"/>
</dbReference>
<dbReference type="SMR" id="Q50DL8"/>
<dbReference type="GeneID" id="3416031"/>
<dbReference type="CTD" id="4519"/>
<dbReference type="GO" id="GO:0005743">
    <property type="term" value="C:mitochondrial inner membrane"/>
    <property type="evidence" value="ECO:0007669"/>
    <property type="project" value="UniProtKB-SubCell"/>
</dbReference>
<dbReference type="GO" id="GO:0045275">
    <property type="term" value="C:respiratory chain complex III"/>
    <property type="evidence" value="ECO:0007669"/>
    <property type="project" value="InterPro"/>
</dbReference>
<dbReference type="GO" id="GO:0046872">
    <property type="term" value="F:metal ion binding"/>
    <property type="evidence" value="ECO:0007669"/>
    <property type="project" value="UniProtKB-KW"/>
</dbReference>
<dbReference type="GO" id="GO:0008121">
    <property type="term" value="F:ubiquinol-cytochrome-c reductase activity"/>
    <property type="evidence" value="ECO:0007669"/>
    <property type="project" value="InterPro"/>
</dbReference>
<dbReference type="GO" id="GO:0006122">
    <property type="term" value="P:mitochondrial electron transport, ubiquinol to cytochrome c"/>
    <property type="evidence" value="ECO:0007669"/>
    <property type="project" value="TreeGrafter"/>
</dbReference>
<dbReference type="CDD" id="cd00290">
    <property type="entry name" value="cytochrome_b_C"/>
    <property type="match status" value="1"/>
</dbReference>
<dbReference type="CDD" id="cd00284">
    <property type="entry name" value="Cytochrome_b_N"/>
    <property type="match status" value="1"/>
</dbReference>
<dbReference type="FunFam" id="1.20.810.10:FF:000002">
    <property type="entry name" value="Cytochrome b"/>
    <property type="match status" value="1"/>
</dbReference>
<dbReference type="Gene3D" id="1.20.810.10">
    <property type="entry name" value="Cytochrome Bc1 Complex, Chain C"/>
    <property type="match status" value="1"/>
</dbReference>
<dbReference type="InterPro" id="IPR005798">
    <property type="entry name" value="Cyt_b/b6_C"/>
</dbReference>
<dbReference type="InterPro" id="IPR036150">
    <property type="entry name" value="Cyt_b/b6_C_sf"/>
</dbReference>
<dbReference type="InterPro" id="IPR005797">
    <property type="entry name" value="Cyt_b/b6_N"/>
</dbReference>
<dbReference type="InterPro" id="IPR027387">
    <property type="entry name" value="Cytb/b6-like_sf"/>
</dbReference>
<dbReference type="InterPro" id="IPR030689">
    <property type="entry name" value="Cytochrome_b"/>
</dbReference>
<dbReference type="InterPro" id="IPR048260">
    <property type="entry name" value="Cytochrome_b_C_euk/bac"/>
</dbReference>
<dbReference type="InterPro" id="IPR048259">
    <property type="entry name" value="Cytochrome_b_N_euk/bac"/>
</dbReference>
<dbReference type="InterPro" id="IPR016174">
    <property type="entry name" value="Di-haem_cyt_TM"/>
</dbReference>
<dbReference type="PANTHER" id="PTHR19271">
    <property type="entry name" value="CYTOCHROME B"/>
    <property type="match status" value="1"/>
</dbReference>
<dbReference type="PANTHER" id="PTHR19271:SF16">
    <property type="entry name" value="CYTOCHROME B"/>
    <property type="match status" value="1"/>
</dbReference>
<dbReference type="Pfam" id="PF00032">
    <property type="entry name" value="Cytochrom_B_C"/>
    <property type="match status" value="1"/>
</dbReference>
<dbReference type="Pfam" id="PF00033">
    <property type="entry name" value="Cytochrome_B"/>
    <property type="match status" value="1"/>
</dbReference>
<dbReference type="PIRSF" id="PIRSF038885">
    <property type="entry name" value="COB"/>
    <property type="match status" value="1"/>
</dbReference>
<dbReference type="SUPFAM" id="SSF81648">
    <property type="entry name" value="a domain/subunit of cytochrome bc1 complex (Ubiquinol-cytochrome c reductase)"/>
    <property type="match status" value="1"/>
</dbReference>
<dbReference type="SUPFAM" id="SSF81342">
    <property type="entry name" value="Transmembrane di-heme cytochromes"/>
    <property type="match status" value="1"/>
</dbReference>
<dbReference type="PROSITE" id="PS51003">
    <property type="entry name" value="CYTB_CTER"/>
    <property type="match status" value="1"/>
</dbReference>
<dbReference type="PROSITE" id="PS51002">
    <property type="entry name" value="CYTB_NTER"/>
    <property type="match status" value="1"/>
</dbReference>
<protein>
    <recommendedName>
        <fullName>Cytochrome b</fullName>
    </recommendedName>
    <alternativeName>
        <fullName>Complex III subunit 3</fullName>
    </alternativeName>
    <alternativeName>
        <fullName>Complex III subunit III</fullName>
    </alternativeName>
    <alternativeName>
        <fullName>Cytochrome b-c1 complex subunit 3</fullName>
    </alternativeName>
    <alternativeName>
        <fullName>Ubiquinol-cytochrome-c reductase complex cytochrome b subunit</fullName>
    </alternativeName>
</protein>
<keyword id="KW-0249">Electron transport</keyword>
<keyword id="KW-0349">Heme</keyword>
<keyword id="KW-0408">Iron</keyword>
<keyword id="KW-0472">Membrane</keyword>
<keyword id="KW-0479">Metal-binding</keyword>
<keyword id="KW-0496">Mitochondrion</keyword>
<keyword id="KW-0999">Mitochondrion inner membrane</keyword>
<keyword id="KW-0679">Respiratory chain</keyword>
<keyword id="KW-0812">Transmembrane</keyword>
<keyword id="KW-1133">Transmembrane helix</keyword>
<keyword id="KW-0813">Transport</keyword>
<keyword id="KW-0830">Ubiquinone</keyword>
<organism>
    <name type="scientific">Chlorocebus aethiops</name>
    <name type="common">Green monkey</name>
    <name type="synonym">Cercopithecus aethiops</name>
    <dbReference type="NCBI Taxonomy" id="9534"/>
    <lineage>
        <taxon>Eukaryota</taxon>
        <taxon>Metazoa</taxon>
        <taxon>Chordata</taxon>
        <taxon>Craniata</taxon>
        <taxon>Vertebrata</taxon>
        <taxon>Euteleostomi</taxon>
        <taxon>Mammalia</taxon>
        <taxon>Eutheria</taxon>
        <taxon>Euarchontoglires</taxon>
        <taxon>Primates</taxon>
        <taxon>Haplorrhini</taxon>
        <taxon>Catarrhini</taxon>
        <taxon>Cercopithecidae</taxon>
        <taxon>Cercopithecinae</taxon>
        <taxon>Chlorocebus</taxon>
    </lineage>
</organism>
<gene>
    <name type="primary">MT-CYB</name>
    <name type="synonym">COB</name>
    <name type="synonym">CYTB</name>
    <name type="synonym">MTCYB</name>
</gene>
<evidence type="ECO:0000250" key="1"/>
<evidence type="ECO:0000250" key="2">
    <source>
        <dbReference type="UniProtKB" id="P00157"/>
    </source>
</evidence>
<evidence type="ECO:0000255" key="3">
    <source>
        <dbReference type="PROSITE-ProRule" id="PRU00967"/>
    </source>
</evidence>
<evidence type="ECO:0000255" key="4">
    <source>
        <dbReference type="PROSITE-ProRule" id="PRU00968"/>
    </source>
</evidence>
<sequence>MTPMRKSNPIMKMINHSLIDLPTPSNISMWWNFGSLLAFCLILQIITGLFLAMHYSPDTSSAFSSIAHITRDVNHGWIIRYLHANGASMFFICLFLHVGRSLYYGSFLLLKTWNTGIMLLFLTMATAFMGYVLPWGQMSFWGATVITNLLSAIPYIGTDLVQWVWGGYSIGNPTLSRFFTLHFTLPFIITALTTVHLLFLHETGSNNPCGISSDSDKITFHPYYTIKDILGLILLLFILTALTLLSPDLLNDPDNYTPADPLNTPPHIKPEWYFLFAYAILRSVPNKLGGVLALFLSILILSIIPMLHNSKQQSMMFRPLSQFLFWLLITTLLTLTWIGSQPVSQPFILIGQLASMTYFTTILILMPLTSLIENNLLKWT</sequence>
<geneLocation type="mitochondrion"/>
<feature type="chain" id="PRO_0000254786" description="Cytochrome b">
    <location>
        <begin position="1"/>
        <end position="380"/>
    </location>
</feature>
<feature type="transmembrane region" description="Helical" evidence="2">
    <location>
        <begin position="33"/>
        <end position="53"/>
    </location>
</feature>
<feature type="transmembrane region" description="Helical" evidence="2">
    <location>
        <begin position="77"/>
        <end position="98"/>
    </location>
</feature>
<feature type="transmembrane region" description="Helical" evidence="2">
    <location>
        <begin position="113"/>
        <end position="133"/>
    </location>
</feature>
<feature type="transmembrane region" description="Helical" evidence="2">
    <location>
        <begin position="178"/>
        <end position="198"/>
    </location>
</feature>
<feature type="transmembrane region" description="Helical" evidence="2">
    <location>
        <begin position="226"/>
        <end position="246"/>
    </location>
</feature>
<feature type="transmembrane region" description="Helical" evidence="2">
    <location>
        <begin position="288"/>
        <end position="308"/>
    </location>
</feature>
<feature type="transmembrane region" description="Helical" evidence="2">
    <location>
        <begin position="320"/>
        <end position="340"/>
    </location>
</feature>
<feature type="transmembrane region" description="Helical" evidence="2">
    <location>
        <begin position="347"/>
        <end position="367"/>
    </location>
</feature>
<feature type="binding site" description="axial binding residue" evidence="2">
    <location>
        <position position="83"/>
    </location>
    <ligand>
        <name>heme b</name>
        <dbReference type="ChEBI" id="CHEBI:60344"/>
        <label>b562</label>
    </ligand>
    <ligandPart>
        <name>Fe</name>
        <dbReference type="ChEBI" id="CHEBI:18248"/>
    </ligandPart>
</feature>
<feature type="binding site" description="axial binding residue" evidence="2">
    <location>
        <position position="97"/>
    </location>
    <ligand>
        <name>heme b</name>
        <dbReference type="ChEBI" id="CHEBI:60344"/>
        <label>b566</label>
    </ligand>
    <ligandPart>
        <name>Fe</name>
        <dbReference type="ChEBI" id="CHEBI:18248"/>
    </ligandPart>
</feature>
<feature type="binding site" description="axial binding residue" evidence="2">
    <location>
        <position position="182"/>
    </location>
    <ligand>
        <name>heme b</name>
        <dbReference type="ChEBI" id="CHEBI:60344"/>
        <label>b562</label>
    </ligand>
    <ligandPart>
        <name>Fe</name>
        <dbReference type="ChEBI" id="CHEBI:18248"/>
    </ligandPart>
</feature>
<feature type="binding site" description="axial binding residue" evidence="2">
    <location>
        <position position="196"/>
    </location>
    <ligand>
        <name>heme b</name>
        <dbReference type="ChEBI" id="CHEBI:60344"/>
        <label>b566</label>
    </ligand>
    <ligandPart>
        <name>Fe</name>
        <dbReference type="ChEBI" id="CHEBI:18248"/>
    </ligandPart>
</feature>
<feature type="binding site" evidence="2">
    <location>
        <position position="201"/>
    </location>
    <ligand>
        <name>a ubiquinone</name>
        <dbReference type="ChEBI" id="CHEBI:16389"/>
    </ligand>
</feature>
<accession>Q50DL8</accession>